<dbReference type="EC" id="2.5.1.55" evidence="1"/>
<dbReference type="EMBL" id="CP001111">
    <property type="protein sequence ID" value="ACF51154.1"/>
    <property type="molecule type" value="Genomic_DNA"/>
</dbReference>
<dbReference type="RefSeq" id="WP_012510652.1">
    <property type="nucleotide sequence ID" value="NC_011071.1"/>
</dbReference>
<dbReference type="SMR" id="B4SR83"/>
<dbReference type="STRING" id="391008.Smal_1449"/>
<dbReference type="GeneID" id="97225036"/>
<dbReference type="KEGG" id="smt:Smal_1449"/>
<dbReference type="eggNOG" id="COG2877">
    <property type="taxonomic scope" value="Bacteria"/>
</dbReference>
<dbReference type="HOGENOM" id="CLU_036666_0_0_6"/>
<dbReference type="OrthoDB" id="9776934at2"/>
<dbReference type="UniPathway" id="UPA00030"/>
<dbReference type="UniPathway" id="UPA00357">
    <property type="reaction ID" value="UER00474"/>
</dbReference>
<dbReference type="Proteomes" id="UP000001867">
    <property type="component" value="Chromosome"/>
</dbReference>
<dbReference type="GO" id="GO:0005737">
    <property type="term" value="C:cytoplasm"/>
    <property type="evidence" value="ECO:0007669"/>
    <property type="project" value="UniProtKB-SubCell"/>
</dbReference>
<dbReference type="GO" id="GO:0008676">
    <property type="term" value="F:3-deoxy-8-phosphooctulonate synthase activity"/>
    <property type="evidence" value="ECO:0007669"/>
    <property type="project" value="UniProtKB-UniRule"/>
</dbReference>
<dbReference type="GO" id="GO:0019294">
    <property type="term" value="P:keto-3-deoxy-D-manno-octulosonic acid biosynthetic process"/>
    <property type="evidence" value="ECO:0007669"/>
    <property type="project" value="UniProtKB-UniRule"/>
</dbReference>
<dbReference type="Gene3D" id="3.20.20.70">
    <property type="entry name" value="Aldolase class I"/>
    <property type="match status" value="1"/>
</dbReference>
<dbReference type="HAMAP" id="MF_00056">
    <property type="entry name" value="KDO8P_synth"/>
    <property type="match status" value="1"/>
</dbReference>
<dbReference type="InterPro" id="IPR013785">
    <property type="entry name" value="Aldolase_TIM"/>
</dbReference>
<dbReference type="InterPro" id="IPR006218">
    <property type="entry name" value="DAHP1/KDSA"/>
</dbReference>
<dbReference type="InterPro" id="IPR006269">
    <property type="entry name" value="KDO8P_synthase"/>
</dbReference>
<dbReference type="NCBIfam" id="TIGR01362">
    <property type="entry name" value="KDO8P_synth"/>
    <property type="match status" value="1"/>
</dbReference>
<dbReference type="NCBIfam" id="NF003543">
    <property type="entry name" value="PRK05198.1"/>
    <property type="match status" value="1"/>
</dbReference>
<dbReference type="PANTHER" id="PTHR21057">
    <property type="entry name" value="PHOSPHO-2-DEHYDRO-3-DEOXYHEPTONATE ALDOLASE"/>
    <property type="match status" value="1"/>
</dbReference>
<dbReference type="Pfam" id="PF00793">
    <property type="entry name" value="DAHP_synth_1"/>
    <property type="match status" value="1"/>
</dbReference>
<dbReference type="SUPFAM" id="SSF51569">
    <property type="entry name" value="Aldolase"/>
    <property type="match status" value="1"/>
</dbReference>
<organism>
    <name type="scientific">Stenotrophomonas maltophilia (strain R551-3)</name>
    <dbReference type="NCBI Taxonomy" id="391008"/>
    <lineage>
        <taxon>Bacteria</taxon>
        <taxon>Pseudomonadati</taxon>
        <taxon>Pseudomonadota</taxon>
        <taxon>Gammaproteobacteria</taxon>
        <taxon>Lysobacterales</taxon>
        <taxon>Lysobacteraceae</taxon>
        <taxon>Stenotrophomonas</taxon>
        <taxon>Stenotrophomonas maltophilia group</taxon>
    </lineage>
</organism>
<sequence length="276" mass="29764">MKLCGFEVGLDQPLFLIAGPCVIESMQLQLDTAGKLKEVTDRLGVNFIFKSSFDKANRTSGTAFRGPGMEEGLKVLAEVKKQIGVPVLTDVHEYTPMDEVASVVDVLQTPAFLVRQTDFIRKVCSAGKPVNIKKGQFLAPWDMKPVVEKAKATGNEQIMVCERGASFGYNNLVSDMRSLAVMRDTGCPVVFDATHSVQLPGGQGTSSGGQREHVPVLARAAVAVGISGLFAETHPDPSKALSDGPNAWPLDQMEALLETLMELDAVTKKHGFSRFA</sequence>
<name>KDSA_STRM5</name>
<reference key="1">
    <citation type="submission" date="2008-06" db="EMBL/GenBank/DDBJ databases">
        <title>Complete sequence of Stenotrophomonas maltophilia R551-3.</title>
        <authorList>
            <consortium name="US DOE Joint Genome Institute"/>
            <person name="Lucas S."/>
            <person name="Copeland A."/>
            <person name="Lapidus A."/>
            <person name="Glavina del Rio T."/>
            <person name="Dalin E."/>
            <person name="Tice H."/>
            <person name="Pitluck S."/>
            <person name="Chain P."/>
            <person name="Malfatti S."/>
            <person name="Shin M."/>
            <person name="Vergez L."/>
            <person name="Lang D."/>
            <person name="Schmutz J."/>
            <person name="Larimer F."/>
            <person name="Land M."/>
            <person name="Hauser L."/>
            <person name="Kyrpides N."/>
            <person name="Mikhailova N."/>
            <person name="Taghavi S."/>
            <person name="Monchy S."/>
            <person name="Newman L."/>
            <person name="Vangronsveld J."/>
            <person name="van der Lelie D."/>
            <person name="Richardson P."/>
        </authorList>
    </citation>
    <scope>NUCLEOTIDE SEQUENCE [LARGE SCALE GENOMIC DNA]</scope>
    <source>
        <strain>R551-3</strain>
    </source>
</reference>
<gene>
    <name evidence="1" type="primary">kdsA</name>
    <name type="ordered locus">Smal_1449</name>
</gene>
<evidence type="ECO:0000255" key="1">
    <source>
        <dbReference type="HAMAP-Rule" id="MF_00056"/>
    </source>
</evidence>
<keyword id="KW-0963">Cytoplasm</keyword>
<keyword id="KW-0448">Lipopolysaccharide biosynthesis</keyword>
<keyword id="KW-0808">Transferase</keyword>
<accession>B4SR83</accession>
<protein>
    <recommendedName>
        <fullName evidence="1">2-dehydro-3-deoxyphosphooctonate aldolase</fullName>
        <ecNumber evidence="1">2.5.1.55</ecNumber>
    </recommendedName>
    <alternativeName>
        <fullName evidence="1">3-deoxy-D-manno-octulosonic acid 8-phosphate synthase</fullName>
    </alternativeName>
    <alternativeName>
        <fullName evidence="1">KDO-8-phosphate synthase</fullName>
        <shortName evidence="1">KDO 8-P synthase</shortName>
        <shortName evidence="1">KDOPS</shortName>
    </alternativeName>
    <alternativeName>
        <fullName evidence="1">Phospho-2-dehydro-3-deoxyoctonate aldolase</fullName>
    </alternativeName>
</protein>
<proteinExistence type="inferred from homology"/>
<comment type="catalytic activity">
    <reaction evidence="1">
        <text>D-arabinose 5-phosphate + phosphoenolpyruvate + H2O = 3-deoxy-alpha-D-manno-2-octulosonate-8-phosphate + phosphate</text>
        <dbReference type="Rhea" id="RHEA:14053"/>
        <dbReference type="ChEBI" id="CHEBI:15377"/>
        <dbReference type="ChEBI" id="CHEBI:43474"/>
        <dbReference type="ChEBI" id="CHEBI:57693"/>
        <dbReference type="ChEBI" id="CHEBI:58702"/>
        <dbReference type="ChEBI" id="CHEBI:85985"/>
        <dbReference type="EC" id="2.5.1.55"/>
    </reaction>
</comment>
<comment type="pathway">
    <text evidence="1">Carbohydrate biosynthesis; 3-deoxy-D-manno-octulosonate biosynthesis; 3-deoxy-D-manno-octulosonate from D-ribulose 5-phosphate: step 2/3.</text>
</comment>
<comment type="pathway">
    <text evidence="1">Bacterial outer membrane biogenesis; lipopolysaccharide biosynthesis.</text>
</comment>
<comment type="subcellular location">
    <subcellularLocation>
        <location evidence="1">Cytoplasm</location>
    </subcellularLocation>
</comment>
<comment type="similarity">
    <text evidence="1">Belongs to the KdsA family.</text>
</comment>
<feature type="chain" id="PRO_1000091839" description="2-dehydro-3-deoxyphosphooctonate aldolase">
    <location>
        <begin position="1"/>
        <end position="276"/>
    </location>
</feature>